<reference key="1">
    <citation type="submission" date="2007-03" db="EMBL/GenBank/DDBJ databases">
        <title>Complete sequence of Shewanella loihica PV-4.</title>
        <authorList>
            <consortium name="US DOE Joint Genome Institute"/>
            <person name="Copeland A."/>
            <person name="Lucas S."/>
            <person name="Lapidus A."/>
            <person name="Barry K."/>
            <person name="Detter J.C."/>
            <person name="Glavina del Rio T."/>
            <person name="Hammon N."/>
            <person name="Israni S."/>
            <person name="Dalin E."/>
            <person name="Tice H."/>
            <person name="Pitluck S."/>
            <person name="Chain P."/>
            <person name="Malfatti S."/>
            <person name="Shin M."/>
            <person name="Vergez L."/>
            <person name="Schmutz J."/>
            <person name="Larimer F."/>
            <person name="Land M."/>
            <person name="Hauser L."/>
            <person name="Kyrpides N."/>
            <person name="Mikhailova N."/>
            <person name="Romine M.F."/>
            <person name="Serres G."/>
            <person name="Fredrickson J."/>
            <person name="Tiedje J."/>
            <person name="Richardson P."/>
        </authorList>
    </citation>
    <scope>NUCLEOTIDE SEQUENCE [LARGE SCALE GENOMIC DNA]</scope>
    <source>
        <strain>ATCC BAA-1088 / PV-4</strain>
    </source>
</reference>
<protein>
    <recommendedName>
        <fullName evidence="1">3-octaprenyl-4-hydroxybenzoate carboxy-lyase</fullName>
        <ecNumber evidence="1">4.1.1.98</ecNumber>
    </recommendedName>
    <alternativeName>
        <fullName evidence="1">Polyprenyl p-hydroxybenzoate decarboxylase</fullName>
    </alternativeName>
</protein>
<name>UBID_SHELP</name>
<evidence type="ECO:0000255" key="1">
    <source>
        <dbReference type="HAMAP-Rule" id="MF_01636"/>
    </source>
</evidence>
<feature type="chain" id="PRO_1000069862" description="3-octaprenyl-4-hydroxybenzoate carboxy-lyase">
    <location>
        <begin position="1"/>
        <end position="493"/>
    </location>
</feature>
<feature type="active site" description="Proton donor" evidence="1">
    <location>
        <position position="287"/>
    </location>
</feature>
<feature type="binding site" evidence="1">
    <location>
        <position position="172"/>
    </location>
    <ligand>
        <name>Mn(2+)</name>
        <dbReference type="ChEBI" id="CHEBI:29035"/>
    </ligand>
</feature>
<feature type="binding site" evidence="1">
    <location>
        <begin position="175"/>
        <end position="177"/>
    </location>
    <ligand>
        <name>prenylated FMN</name>
        <dbReference type="ChEBI" id="CHEBI:87746"/>
    </ligand>
</feature>
<feature type="binding site" evidence="1">
    <location>
        <begin position="189"/>
        <end position="191"/>
    </location>
    <ligand>
        <name>prenylated FMN</name>
        <dbReference type="ChEBI" id="CHEBI:87746"/>
    </ligand>
</feature>
<feature type="binding site" evidence="1">
    <location>
        <begin position="194"/>
        <end position="195"/>
    </location>
    <ligand>
        <name>prenylated FMN</name>
        <dbReference type="ChEBI" id="CHEBI:87746"/>
    </ligand>
</feature>
<feature type="binding site" evidence="1">
    <location>
        <position position="238"/>
    </location>
    <ligand>
        <name>Mn(2+)</name>
        <dbReference type="ChEBI" id="CHEBI:29035"/>
    </ligand>
</feature>
<organism>
    <name type="scientific">Shewanella loihica (strain ATCC BAA-1088 / PV-4)</name>
    <dbReference type="NCBI Taxonomy" id="323850"/>
    <lineage>
        <taxon>Bacteria</taxon>
        <taxon>Pseudomonadati</taxon>
        <taxon>Pseudomonadota</taxon>
        <taxon>Gammaproteobacteria</taxon>
        <taxon>Alteromonadales</taxon>
        <taxon>Shewanellaceae</taxon>
        <taxon>Shewanella</taxon>
    </lineage>
</organism>
<keyword id="KW-1003">Cell membrane</keyword>
<keyword id="KW-0210">Decarboxylase</keyword>
<keyword id="KW-0285">Flavoprotein</keyword>
<keyword id="KW-0288">FMN</keyword>
<keyword id="KW-0456">Lyase</keyword>
<keyword id="KW-0464">Manganese</keyword>
<keyword id="KW-0472">Membrane</keyword>
<keyword id="KW-0479">Metal-binding</keyword>
<keyword id="KW-1185">Reference proteome</keyword>
<keyword id="KW-0831">Ubiquinone biosynthesis</keyword>
<gene>
    <name evidence="1" type="primary">ubiD</name>
    <name type="ordered locus">Shew_0360</name>
</gene>
<sequence>MSFKDLRSFIDHLEANGELKRIAHPVDPHLEMTEIADRVLRAKGPALLFENPVGKTMPVLANLFGTPKRVAMALGKEDPLALRDVGELLAFLKEPEPPRGFKDAISKIPMFKQALNMPPKTVRNAPCQEVVVSGDEVDLTKLPIQHCWPGDVAPLVTWGLTITKGPRQKRQNLGIYRQQLLGKNKLIMRWLDHRGGALDFKDFKEQHPGERYPVVVALGADPVTILGAVTPVPDAMSEYAFAGLLRGERTEVCKALSCDLEVPATSEIILEGYIEPGEMAEEGPYGDHTGYYNETDEFPVFTVTHVSHRRDAIYHSTYTGRPPDEPAMLGVALNEVFVPILRKQYPEIVDFYLPPEGCSYRMAVISIRKQYPGHAKRVMMGAWSFLRQFMYTKFIIIVDEDVNCRDWNDVIWAITTRMDPKRDTVMIDNTPIDYLDFASPVAGLGSKMGMDATNKWEGETDREWGTPIVMDEAVKQRIDAIWDDLGIDDAPTL</sequence>
<accession>A3Q9T4</accession>
<proteinExistence type="inferred from homology"/>
<dbReference type="EC" id="4.1.1.98" evidence="1"/>
<dbReference type="EMBL" id="CP000606">
    <property type="protein sequence ID" value="ABO22232.1"/>
    <property type="molecule type" value="Genomic_DNA"/>
</dbReference>
<dbReference type="RefSeq" id="WP_011864166.1">
    <property type="nucleotide sequence ID" value="NC_009092.1"/>
</dbReference>
<dbReference type="SMR" id="A3Q9T4"/>
<dbReference type="STRING" id="323850.Shew_0360"/>
<dbReference type="KEGG" id="slo:Shew_0360"/>
<dbReference type="eggNOG" id="COG0043">
    <property type="taxonomic scope" value="Bacteria"/>
</dbReference>
<dbReference type="HOGENOM" id="CLU_023348_4_1_6"/>
<dbReference type="OrthoDB" id="9809841at2"/>
<dbReference type="UniPathway" id="UPA00232"/>
<dbReference type="Proteomes" id="UP000001558">
    <property type="component" value="Chromosome"/>
</dbReference>
<dbReference type="GO" id="GO:0005829">
    <property type="term" value="C:cytosol"/>
    <property type="evidence" value="ECO:0007669"/>
    <property type="project" value="TreeGrafter"/>
</dbReference>
<dbReference type="GO" id="GO:0005886">
    <property type="term" value="C:plasma membrane"/>
    <property type="evidence" value="ECO:0007669"/>
    <property type="project" value="UniProtKB-SubCell"/>
</dbReference>
<dbReference type="GO" id="GO:0008694">
    <property type="term" value="F:3-octaprenyl-4-hydroxybenzoate carboxy-lyase activity"/>
    <property type="evidence" value="ECO:0007669"/>
    <property type="project" value="UniProtKB-UniRule"/>
</dbReference>
<dbReference type="GO" id="GO:0046872">
    <property type="term" value="F:metal ion binding"/>
    <property type="evidence" value="ECO:0007669"/>
    <property type="project" value="UniProtKB-KW"/>
</dbReference>
<dbReference type="GO" id="GO:0006744">
    <property type="term" value="P:ubiquinone biosynthetic process"/>
    <property type="evidence" value="ECO:0007669"/>
    <property type="project" value="UniProtKB-UniRule"/>
</dbReference>
<dbReference type="FunFam" id="1.20.5.570:FF:000001">
    <property type="entry name" value="3-octaprenyl-4-hydroxybenzoate carboxy-lyase"/>
    <property type="match status" value="1"/>
</dbReference>
<dbReference type="FunFam" id="3.40.1670.10:FF:000001">
    <property type="entry name" value="3-octaprenyl-4-hydroxybenzoate carboxy-lyase"/>
    <property type="match status" value="1"/>
</dbReference>
<dbReference type="Gene3D" id="1.20.5.570">
    <property type="entry name" value="Single helix bin"/>
    <property type="match status" value="1"/>
</dbReference>
<dbReference type="Gene3D" id="3.40.1670.10">
    <property type="entry name" value="UbiD C-terminal domain-like"/>
    <property type="match status" value="1"/>
</dbReference>
<dbReference type="HAMAP" id="MF_01636">
    <property type="entry name" value="UbiD"/>
    <property type="match status" value="1"/>
</dbReference>
<dbReference type="InterPro" id="IPR002830">
    <property type="entry name" value="UbiD"/>
</dbReference>
<dbReference type="InterPro" id="IPR049381">
    <property type="entry name" value="UbiD-like_C"/>
</dbReference>
<dbReference type="InterPro" id="IPR049383">
    <property type="entry name" value="UbiD-like_N"/>
</dbReference>
<dbReference type="InterPro" id="IPR023677">
    <property type="entry name" value="UbiD_bacteria"/>
</dbReference>
<dbReference type="InterPro" id="IPR048304">
    <property type="entry name" value="UbiD_Rift_dom"/>
</dbReference>
<dbReference type="NCBIfam" id="NF008175">
    <property type="entry name" value="PRK10922.1"/>
    <property type="match status" value="1"/>
</dbReference>
<dbReference type="NCBIfam" id="TIGR00148">
    <property type="entry name" value="UbiD family decarboxylase"/>
    <property type="match status" value="1"/>
</dbReference>
<dbReference type="PANTHER" id="PTHR30108">
    <property type="entry name" value="3-OCTAPRENYL-4-HYDROXYBENZOATE CARBOXY-LYASE-RELATED"/>
    <property type="match status" value="1"/>
</dbReference>
<dbReference type="PANTHER" id="PTHR30108:SF17">
    <property type="entry name" value="FERULIC ACID DECARBOXYLASE 1"/>
    <property type="match status" value="1"/>
</dbReference>
<dbReference type="Pfam" id="PF01977">
    <property type="entry name" value="UbiD"/>
    <property type="match status" value="1"/>
</dbReference>
<dbReference type="Pfam" id="PF20696">
    <property type="entry name" value="UbiD_C"/>
    <property type="match status" value="1"/>
</dbReference>
<dbReference type="Pfam" id="PF20695">
    <property type="entry name" value="UbiD_N"/>
    <property type="match status" value="1"/>
</dbReference>
<dbReference type="SUPFAM" id="SSF50475">
    <property type="entry name" value="FMN-binding split barrel"/>
    <property type="match status" value="1"/>
</dbReference>
<dbReference type="SUPFAM" id="SSF143968">
    <property type="entry name" value="UbiD C-terminal domain-like"/>
    <property type="match status" value="1"/>
</dbReference>
<comment type="function">
    <text evidence="1">Catalyzes the decarboxylation of 3-octaprenyl-4-hydroxy benzoate to 2-octaprenylphenol, an intermediate step in ubiquinone biosynthesis.</text>
</comment>
<comment type="catalytic activity">
    <reaction evidence="1">
        <text>a 4-hydroxy-3-(all-trans-polyprenyl)benzoate + H(+) = a 2-(all-trans-polyprenyl)phenol + CO2</text>
        <dbReference type="Rhea" id="RHEA:41680"/>
        <dbReference type="Rhea" id="RHEA-COMP:9514"/>
        <dbReference type="Rhea" id="RHEA-COMP:9516"/>
        <dbReference type="ChEBI" id="CHEBI:1269"/>
        <dbReference type="ChEBI" id="CHEBI:15378"/>
        <dbReference type="ChEBI" id="CHEBI:16526"/>
        <dbReference type="ChEBI" id="CHEBI:78396"/>
        <dbReference type="EC" id="4.1.1.98"/>
    </reaction>
</comment>
<comment type="cofactor">
    <cofactor evidence="1">
        <name>prenylated FMN</name>
        <dbReference type="ChEBI" id="CHEBI:87746"/>
    </cofactor>
    <text evidence="1">Binds 1 prenylated FMN per subunit.</text>
</comment>
<comment type="cofactor">
    <cofactor evidence="1">
        <name>Mn(2+)</name>
        <dbReference type="ChEBI" id="CHEBI:29035"/>
    </cofactor>
</comment>
<comment type="pathway">
    <text evidence="1">Cofactor biosynthesis; ubiquinone biosynthesis.</text>
</comment>
<comment type="subunit">
    <text evidence="1">Homohexamer.</text>
</comment>
<comment type="subcellular location">
    <subcellularLocation>
        <location evidence="1">Cell membrane</location>
        <topology evidence="1">Peripheral membrane protein</topology>
    </subcellularLocation>
</comment>
<comment type="similarity">
    <text evidence="1">Belongs to the UbiD family.</text>
</comment>